<comment type="function">
    <text evidence="1">Together with its co-chaperonin GroES, plays an essential role in assisting protein folding. The GroEL-GroES system forms a nano-cage that allows encapsulation of the non-native substrate proteins and provides a physical environment optimized to promote and accelerate protein folding.</text>
</comment>
<comment type="catalytic activity">
    <reaction evidence="1">
        <text>ATP + H2O + a folded polypeptide = ADP + phosphate + an unfolded polypeptide.</text>
        <dbReference type="EC" id="5.6.1.7"/>
    </reaction>
</comment>
<comment type="subunit">
    <text evidence="1">Forms a cylinder of 14 subunits composed of two heptameric rings stacked back-to-back. Interacts with the co-chaperonin GroES.</text>
</comment>
<comment type="subcellular location">
    <subcellularLocation>
        <location evidence="1">Cytoplasm</location>
    </subcellularLocation>
</comment>
<comment type="similarity">
    <text evidence="1">Belongs to the chaperonin (HSP60) family.</text>
</comment>
<organism>
    <name type="scientific">Chlorobium luteolum (strain DSM 273 / BCRC 81028 / 2530)</name>
    <name type="common">Pelodictyon luteolum</name>
    <dbReference type="NCBI Taxonomy" id="319225"/>
    <lineage>
        <taxon>Bacteria</taxon>
        <taxon>Pseudomonadati</taxon>
        <taxon>Chlorobiota</taxon>
        <taxon>Chlorobiia</taxon>
        <taxon>Chlorobiales</taxon>
        <taxon>Chlorobiaceae</taxon>
        <taxon>Chlorobium/Pelodictyon group</taxon>
        <taxon>Pelodictyon</taxon>
    </lineage>
</organism>
<proteinExistence type="inferred from homology"/>
<evidence type="ECO:0000255" key="1">
    <source>
        <dbReference type="HAMAP-Rule" id="MF_00600"/>
    </source>
</evidence>
<evidence type="ECO:0000256" key="2">
    <source>
        <dbReference type="SAM" id="MobiDB-lite"/>
    </source>
</evidence>
<feature type="chain" id="PRO_0000256944" description="Chaperonin GroEL">
    <location>
        <begin position="1"/>
        <end position="547"/>
    </location>
</feature>
<feature type="region of interest" description="Disordered" evidence="2">
    <location>
        <begin position="528"/>
        <end position="547"/>
    </location>
</feature>
<feature type="compositionally biased region" description="Gly residues" evidence="2">
    <location>
        <begin position="538"/>
        <end position="547"/>
    </location>
</feature>
<feature type="binding site" evidence="1">
    <location>
        <begin position="30"/>
        <end position="33"/>
    </location>
    <ligand>
        <name>ATP</name>
        <dbReference type="ChEBI" id="CHEBI:30616"/>
    </ligand>
</feature>
<feature type="binding site" evidence="1">
    <location>
        <position position="51"/>
    </location>
    <ligand>
        <name>ATP</name>
        <dbReference type="ChEBI" id="CHEBI:30616"/>
    </ligand>
</feature>
<feature type="binding site" evidence="1">
    <location>
        <begin position="87"/>
        <end position="91"/>
    </location>
    <ligand>
        <name>ATP</name>
        <dbReference type="ChEBI" id="CHEBI:30616"/>
    </ligand>
</feature>
<feature type="binding site" evidence="1">
    <location>
        <position position="415"/>
    </location>
    <ligand>
        <name>ATP</name>
        <dbReference type="ChEBI" id="CHEBI:30616"/>
    </ligand>
</feature>
<feature type="binding site" evidence="1">
    <location>
        <position position="496"/>
    </location>
    <ligand>
        <name>ATP</name>
        <dbReference type="ChEBI" id="CHEBI:30616"/>
    </ligand>
</feature>
<name>CH60_CHLL3</name>
<accession>Q3B5F5</accession>
<gene>
    <name evidence="1" type="primary">groEL</name>
    <name evidence="1" type="synonym">groL</name>
    <name type="ordered locus">Plut_0542</name>
</gene>
<keyword id="KW-0067">ATP-binding</keyword>
<keyword id="KW-0143">Chaperone</keyword>
<keyword id="KW-0963">Cytoplasm</keyword>
<keyword id="KW-0413">Isomerase</keyword>
<keyword id="KW-0547">Nucleotide-binding</keyword>
<keyword id="KW-1185">Reference proteome</keyword>
<protein>
    <recommendedName>
        <fullName evidence="1">Chaperonin GroEL</fullName>
        <ecNumber evidence="1">5.6.1.7</ecNumber>
    </recommendedName>
    <alternativeName>
        <fullName evidence="1">60 kDa chaperonin</fullName>
    </alternativeName>
    <alternativeName>
        <fullName evidence="1">Chaperonin-60</fullName>
        <shortName evidence="1">Cpn60</shortName>
    </alternativeName>
</protein>
<reference key="1">
    <citation type="submission" date="2005-08" db="EMBL/GenBank/DDBJ databases">
        <title>Complete sequence of Pelodictyon luteolum DSM 273.</title>
        <authorList>
            <consortium name="US DOE Joint Genome Institute"/>
            <person name="Copeland A."/>
            <person name="Lucas S."/>
            <person name="Lapidus A."/>
            <person name="Barry K."/>
            <person name="Detter J.C."/>
            <person name="Glavina T."/>
            <person name="Hammon N."/>
            <person name="Israni S."/>
            <person name="Pitluck S."/>
            <person name="Bryant D."/>
            <person name="Schmutz J."/>
            <person name="Larimer F."/>
            <person name="Land M."/>
            <person name="Kyrpides N."/>
            <person name="Ivanova N."/>
            <person name="Richardson P."/>
        </authorList>
    </citation>
    <scope>NUCLEOTIDE SEQUENCE [LARGE SCALE GENOMIC DNA]</scope>
    <source>
        <strain>DSM 273 / BCRC 81028 / 2530</strain>
    </source>
</reference>
<dbReference type="EC" id="5.6.1.7" evidence="1"/>
<dbReference type="EMBL" id="CP000096">
    <property type="protein sequence ID" value="ABB23426.1"/>
    <property type="molecule type" value="Genomic_DNA"/>
</dbReference>
<dbReference type="RefSeq" id="WP_011357301.1">
    <property type="nucleotide sequence ID" value="NC_007512.1"/>
</dbReference>
<dbReference type="SMR" id="Q3B5F5"/>
<dbReference type="STRING" id="319225.Plut_0542"/>
<dbReference type="KEGG" id="plt:Plut_0542"/>
<dbReference type="eggNOG" id="COG0459">
    <property type="taxonomic scope" value="Bacteria"/>
</dbReference>
<dbReference type="HOGENOM" id="CLU_016503_3_0_10"/>
<dbReference type="OrthoDB" id="9766614at2"/>
<dbReference type="Proteomes" id="UP000002709">
    <property type="component" value="Chromosome"/>
</dbReference>
<dbReference type="GO" id="GO:0005737">
    <property type="term" value="C:cytoplasm"/>
    <property type="evidence" value="ECO:0007669"/>
    <property type="project" value="UniProtKB-SubCell"/>
</dbReference>
<dbReference type="GO" id="GO:0005524">
    <property type="term" value="F:ATP binding"/>
    <property type="evidence" value="ECO:0007669"/>
    <property type="project" value="UniProtKB-UniRule"/>
</dbReference>
<dbReference type="GO" id="GO:0140662">
    <property type="term" value="F:ATP-dependent protein folding chaperone"/>
    <property type="evidence" value="ECO:0007669"/>
    <property type="project" value="InterPro"/>
</dbReference>
<dbReference type="GO" id="GO:0016853">
    <property type="term" value="F:isomerase activity"/>
    <property type="evidence" value="ECO:0007669"/>
    <property type="project" value="UniProtKB-KW"/>
</dbReference>
<dbReference type="GO" id="GO:0051082">
    <property type="term" value="F:unfolded protein binding"/>
    <property type="evidence" value="ECO:0007669"/>
    <property type="project" value="UniProtKB-UniRule"/>
</dbReference>
<dbReference type="GO" id="GO:0042026">
    <property type="term" value="P:protein refolding"/>
    <property type="evidence" value="ECO:0007669"/>
    <property type="project" value="UniProtKB-UniRule"/>
</dbReference>
<dbReference type="CDD" id="cd03344">
    <property type="entry name" value="GroEL"/>
    <property type="match status" value="1"/>
</dbReference>
<dbReference type="FunFam" id="3.50.7.10:FF:000001">
    <property type="entry name" value="60 kDa chaperonin"/>
    <property type="match status" value="1"/>
</dbReference>
<dbReference type="Gene3D" id="3.50.7.10">
    <property type="entry name" value="GroEL"/>
    <property type="match status" value="1"/>
</dbReference>
<dbReference type="Gene3D" id="1.10.560.10">
    <property type="entry name" value="GroEL-like equatorial domain"/>
    <property type="match status" value="1"/>
</dbReference>
<dbReference type="Gene3D" id="3.30.260.10">
    <property type="entry name" value="TCP-1-like chaperonin intermediate domain"/>
    <property type="match status" value="1"/>
</dbReference>
<dbReference type="HAMAP" id="MF_00600">
    <property type="entry name" value="CH60"/>
    <property type="match status" value="1"/>
</dbReference>
<dbReference type="InterPro" id="IPR018370">
    <property type="entry name" value="Chaperonin_Cpn60_CS"/>
</dbReference>
<dbReference type="InterPro" id="IPR001844">
    <property type="entry name" value="Cpn60/GroEL"/>
</dbReference>
<dbReference type="InterPro" id="IPR002423">
    <property type="entry name" value="Cpn60/GroEL/TCP-1"/>
</dbReference>
<dbReference type="InterPro" id="IPR027409">
    <property type="entry name" value="GroEL-like_apical_dom_sf"/>
</dbReference>
<dbReference type="InterPro" id="IPR027413">
    <property type="entry name" value="GROEL-like_equatorial_sf"/>
</dbReference>
<dbReference type="InterPro" id="IPR027410">
    <property type="entry name" value="TCP-1-like_intermed_sf"/>
</dbReference>
<dbReference type="NCBIfam" id="TIGR02348">
    <property type="entry name" value="GroEL"/>
    <property type="match status" value="1"/>
</dbReference>
<dbReference type="NCBIfam" id="NF000592">
    <property type="entry name" value="PRK00013.1"/>
    <property type="match status" value="1"/>
</dbReference>
<dbReference type="NCBIfam" id="NF009487">
    <property type="entry name" value="PRK12849.1"/>
    <property type="match status" value="1"/>
</dbReference>
<dbReference type="NCBIfam" id="NF009488">
    <property type="entry name" value="PRK12850.1"/>
    <property type="match status" value="1"/>
</dbReference>
<dbReference type="NCBIfam" id="NF009489">
    <property type="entry name" value="PRK12851.1"/>
    <property type="match status" value="1"/>
</dbReference>
<dbReference type="PANTHER" id="PTHR45633">
    <property type="entry name" value="60 KDA HEAT SHOCK PROTEIN, MITOCHONDRIAL"/>
    <property type="match status" value="1"/>
</dbReference>
<dbReference type="Pfam" id="PF00118">
    <property type="entry name" value="Cpn60_TCP1"/>
    <property type="match status" value="1"/>
</dbReference>
<dbReference type="PRINTS" id="PR00298">
    <property type="entry name" value="CHAPERONIN60"/>
</dbReference>
<dbReference type="SUPFAM" id="SSF52029">
    <property type="entry name" value="GroEL apical domain-like"/>
    <property type="match status" value="1"/>
</dbReference>
<dbReference type="SUPFAM" id="SSF48592">
    <property type="entry name" value="GroEL equatorial domain-like"/>
    <property type="match status" value="1"/>
</dbReference>
<dbReference type="SUPFAM" id="SSF54849">
    <property type="entry name" value="GroEL-intermediate domain like"/>
    <property type="match status" value="1"/>
</dbReference>
<dbReference type="PROSITE" id="PS00296">
    <property type="entry name" value="CHAPERONINS_CPN60"/>
    <property type="match status" value="1"/>
</dbReference>
<sequence>MTAKDILFDADARAKLKVGVDKLANTVKVTLGPAGRNVLIDKKFGAPTSTKDGVTVAKEIELDDAIENMGAQMVREVASKTSDVAGDGTTTATVLAQAIYREGLKNVAAGARPIDLKRGIDRAVKEVVAELRNISRSISGKKEIAQVGTISANNDPEIGELIAEAMDKVGKDGVITVEEAKGMETELKVVEGMQFDRGYLSPYFVTNSETMEAELEDALILIHDKKIGNMKELLPILEKSAQSGRPLLIIAEDIEGEALATLVVNRLRGTLKVCAVKAPGFGDRRKAMLEDIAILTGGTVISEEKGYKLENATVNYLGQAARITVDKDNTTIVEGKGTQDEIKARINEIKGQIDKSTSDYDTEKLQERLAKLSGGVAVLNIGASTEVEMKEKKARVEDALHATRAAVQEGIVVGGGVALIRAIKGLSNAIADNEDQKTGIDIIRRALEEPLRQIVANTGTTDGAVVLERVKQGEGDFGFNARTEQYEDLVAAGVVDPTKVTRSALENAASVASILLTTEACITDIKEDKSDMPAMPPGGMGGMGGMY</sequence>